<keyword id="KW-0007">Acetylation</keyword>
<keyword id="KW-0963">Cytoplasm</keyword>
<keyword id="KW-0539">Nucleus</keyword>
<keyword id="KW-0597">Phosphoprotein</keyword>
<keyword id="KW-1185">Reference proteome</keyword>
<reference key="1">
    <citation type="journal article" date="1997" name="Mamm. Genome">
        <title>Murine Hn1 on chromosome 11 is expressed in hemopoietic and brain tissues.</title>
        <authorList>
            <person name="Tang W."/>
            <person name="Lai Y.H."/>
            <person name="Han X.D."/>
            <person name="Wong P.M.C."/>
            <person name="Peters L.L."/>
            <person name="Chui D.H.K."/>
        </authorList>
    </citation>
    <scope>NUCLEOTIDE SEQUENCE [MRNA]</scope>
    <scope>TISSUE SPECIFICITY</scope>
    <source>
        <strain>C57BL/6J</strain>
        <tissue>Erythroid cell</tissue>
    </source>
</reference>
<reference key="2">
    <citation type="journal article" date="2005" name="Science">
        <title>The transcriptional landscape of the mammalian genome.</title>
        <authorList>
            <person name="Carninci P."/>
            <person name="Kasukawa T."/>
            <person name="Katayama S."/>
            <person name="Gough J."/>
            <person name="Frith M.C."/>
            <person name="Maeda N."/>
            <person name="Oyama R."/>
            <person name="Ravasi T."/>
            <person name="Lenhard B."/>
            <person name="Wells C."/>
            <person name="Kodzius R."/>
            <person name="Shimokawa K."/>
            <person name="Bajic V.B."/>
            <person name="Brenner S.E."/>
            <person name="Batalov S."/>
            <person name="Forrest A.R."/>
            <person name="Zavolan M."/>
            <person name="Davis M.J."/>
            <person name="Wilming L.G."/>
            <person name="Aidinis V."/>
            <person name="Allen J.E."/>
            <person name="Ambesi-Impiombato A."/>
            <person name="Apweiler R."/>
            <person name="Aturaliya R.N."/>
            <person name="Bailey T.L."/>
            <person name="Bansal M."/>
            <person name="Baxter L."/>
            <person name="Beisel K.W."/>
            <person name="Bersano T."/>
            <person name="Bono H."/>
            <person name="Chalk A.M."/>
            <person name="Chiu K.P."/>
            <person name="Choudhary V."/>
            <person name="Christoffels A."/>
            <person name="Clutterbuck D.R."/>
            <person name="Crowe M.L."/>
            <person name="Dalla E."/>
            <person name="Dalrymple B.P."/>
            <person name="de Bono B."/>
            <person name="Della Gatta G."/>
            <person name="di Bernardo D."/>
            <person name="Down T."/>
            <person name="Engstrom P."/>
            <person name="Fagiolini M."/>
            <person name="Faulkner G."/>
            <person name="Fletcher C.F."/>
            <person name="Fukushima T."/>
            <person name="Furuno M."/>
            <person name="Futaki S."/>
            <person name="Gariboldi M."/>
            <person name="Georgii-Hemming P."/>
            <person name="Gingeras T.R."/>
            <person name="Gojobori T."/>
            <person name="Green R.E."/>
            <person name="Gustincich S."/>
            <person name="Harbers M."/>
            <person name="Hayashi Y."/>
            <person name="Hensch T.K."/>
            <person name="Hirokawa N."/>
            <person name="Hill D."/>
            <person name="Huminiecki L."/>
            <person name="Iacono M."/>
            <person name="Ikeo K."/>
            <person name="Iwama A."/>
            <person name="Ishikawa T."/>
            <person name="Jakt M."/>
            <person name="Kanapin A."/>
            <person name="Katoh M."/>
            <person name="Kawasawa Y."/>
            <person name="Kelso J."/>
            <person name="Kitamura H."/>
            <person name="Kitano H."/>
            <person name="Kollias G."/>
            <person name="Krishnan S.P."/>
            <person name="Kruger A."/>
            <person name="Kummerfeld S.K."/>
            <person name="Kurochkin I.V."/>
            <person name="Lareau L.F."/>
            <person name="Lazarevic D."/>
            <person name="Lipovich L."/>
            <person name="Liu J."/>
            <person name="Liuni S."/>
            <person name="McWilliam S."/>
            <person name="Madan Babu M."/>
            <person name="Madera M."/>
            <person name="Marchionni L."/>
            <person name="Matsuda H."/>
            <person name="Matsuzawa S."/>
            <person name="Miki H."/>
            <person name="Mignone F."/>
            <person name="Miyake S."/>
            <person name="Morris K."/>
            <person name="Mottagui-Tabar S."/>
            <person name="Mulder N."/>
            <person name="Nakano N."/>
            <person name="Nakauchi H."/>
            <person name="Ng P."/>
            <person name="Nilsson R."/>
            <person name="Nishiguchi S."/>
            <person name="Nishikawa S."/>
            <person name="Nori F."/>
            <person name="Ohara O."/>
            <person name="Okazaki Y."/>
            <person name="Orlando V."/>
            <person name="Pang K.C."/>
            <person name="Pavan W.J."/>
            <person name="Pavesi G."/>
            <person name="Pesole G."/>
            <person name="Petrovsky N."/>
            <person name="Piazza S."/>
            <person name="Reed J."/>
            <person name="Reid J.F."/>
            <person name="Ring B.Z."/>
            <person name="Ringwald M."/>
            <person name="Rost B."/>
            <person name="Ruan Y."/>
            <person name="Salzberg S.L."/>
            <person name="Sandelin A."/>
            <person name="Schneider C."/>
            <person name="Schoenbach C."/>
            <person name="Sekiguchi K."/>
            <person name="Semple C.A."/>
            <person name="Seno S."/>
            <person name="Sessa L."/>
            <person name="Sheng Y."/>
            <person name="Shibata Y."/>
            <person name="Shimada H."/>
            <person name="Shimada K."/>
            <person name="Silva D."/>
            <person name="Sinclair B."/>
            <person name="Sperling S."/>
            <person name="Stupka E."/>
            <person name="Sugiura K."/>
            <person name="Sultana R."/>
            <person name="Takenaka Y."/>
            <person name="Taki K."/>
            <person name="Tammoja K."/>
            <person name="Tan S.L."/>
            <person name="Tang S."/>
            <person name="Taylor M.S."/>
            <person name="Tegner J."/>
            <person name="Teichmann S.A."/>
            <person name="Ueda H.R."/>
            <person name="van Nimwegen E."/>
            <person name="Verardo R."/>
            <person name="Wei C.L."/>
            <person name="Yagi K."/>
            <person name="Yamanishi H."/>
            <person name="Zabarovsky E."/>
            <person name="Zhu S."/>
            <person name="Zimmer A."/>
            <person name="Hide W."/>
            <person name="Bult C."/>
            <person name="Grimmond S.M."/>
            <person name="Teasdale R.D."/>
            <person name="Liu E.T."/>
            <person name="Brusic V."/>
            <person name="Quackenbush J."/>
            <person name="Wahlestedt C."/>
            <person name="Mattick J.S."/>
            <person name="Hume D.A."/>
            <person name="Kai C."/>
            <person name="Sasaki D."/>
            <person name="Tomaru Y."/>
            <person name="Fukuda S."/>
            <person name="Kanamori-Katayama M."/>
            <person name="Suzuki M."/>
            <person name="Aoki J."/>
            <person name="Arakawa T."/>
            <person name="Iida J."/>
            <person name="Imamura K."/>
            <person name="Itoh M."/>
            <person name="Kato T."/>
            <person name="Kawaji H."/>
            <person name="Kawagashira N."/>
            <person name="Kawashima T."/>
            <person name="Kojima M."/>
            <person name="Kondo S."/>
            <person name="Konno H."/>
            <person name="Nakano K."/>
            <person name="Ninomiya N."/>
            <person name="Nishio T."/>
            <person name="Okada M."/>
            <person name="Plessy C."/>
            <person name="Shibata K."/>
            <person name="Shiraki T."/>
            <person name="Suzuki S."/>
            <person name="Tagami M."/>
            <person name="Waki K."/>
            <person name="Watahiki A."/>
            <person name="Okamura-Oho Y."/>
            <person name="Suzuki H."/>
            <person name="Kawai J."/>
            <person name="Hayashizaki Y."/>
        </authorList>
    </citation>
    <scope>NUCLEOTIDE SEQUENCE [LARGE SCALE MRNA]</scope>
    <source>
        <strain>BALB/cJ</strain>
        <strain>C57BL/6J</strain>
        <tissue>Bone marrow</tissue>
        <tissue>Embryo</tissue>
        <tissue>Fetal head</tissue>
        <tissue>Fetal heart</tissue>
        <tissue>Placenta</tissue>
        <tissue>Tongue</tissue>
    </source>
</reference>
<reference key="3">
    <citation type="journal article" date="2004" name="Genome Res.">
        <title>The status, quality, and expansion of the NIH full-length cDNA project: the Mammalian Gene Collection (MGC).</title>
        <authorList>
            <consortium name="The MGC Project Team"/>
        </authorList>
    </citation>
    <scope>NUCLEOTIDE SEQUENCE [LARGE SCALE MRNA]</scope>
    <source>
        <strain>Czech II</strain>
        <tissue>Mammary tumor</tissue>
    </source>
</reference>
<reference key="4">
    <citation type="journal article" date="2007" name="Proc. Natl. Acad. Sci. U.S.A.">
        <title>Large-scale phosphorylation analysis of mouse liver.</title>
        <authorList>
            <person name="Villen J."/>
            <person name="Beausoleil S.A."/>
            <person name="Gerber S.A."/>
            <person name="Gygi S.P."/>
        </authorList>
    </citation>
    <scope>IDENTIFICATION BY MASS SPECTROMETRY [LARGE SCALE ANALYSIS]</scope>
    <source>
        <tissue>Liver</tissue>
    </source>
</reference>
<reference key="5">
    <citation type="journal article" date="2009" name="Immunity">
        <title>The phagosomal proteome in interferon-gamma-activated macrophages.</title>
        <authorList>
            <person name="Trost M."/>
            <person name="English L."/>
            <person name="Lemieux S."/>
            <person name="Courcelles M."/>
            <person name="Desjardins M."/>
            <person name="Thibault P."/>
        </authorList>
    </citation>
    <scope>IDENTIFICATION BY MASS SPECTROMETRY [LARGE SCALE ANALYSIS]</scope>
</reference>
<reference key="6">
    <citation type="journal article" date="2010" name="Cell">
        <title>A tissue-specific atlas of mouse protein phosphorylation and expression.</title>
        <authorList>
            <person name="Huttlin E.L."/>
            <person name="Jedrychowski M.P."/>
            <person name="Elias J.E."/>
            <person name="Goswami T."/>
            <person name="Rad R."/>
            <person name="Beausoleil S.A."/>
            <person name="Villen J."/>
            <person name="Haas W."/>
            <person name="Sowa M.E."/>
            <person name="Gygi S.P."/>
        </authorList>
    </citation>
    <scope>PHOSPHORYLATION [LARGE SCALE ANALYSIS] AT THR-54; SER-87 AND SER-88</scope>
    <scope>IDENTIFICATION BY MASS SPECTROMETRY [LARGE SCALE ANALYSIS]</scope>
    <source>
        <tissue>Brain</tissue>
        <tissue>Heart</tissue>
        <tissue>Kidney</tissue>
        <tissue>Lung</tissue>
        <tissue>Spleen</tissue>
        <tissue>Testis</tissue>
    </source>
</reference>
<reference key="7">
    <citation type="journal article" date="2013" name="Mol. Cell">
        <title>SIRT5-mediated lysine desuccinylation impacts diverse metabolic pathways.</title>
        <authorList>
            <person name="Park J."/>
            <person name="Chen Y."/>
            <person name="Tishkoff D.X."/>
            <person name="Peng C."/>
            <person name="Tan M."/>
            <person name="Dai L."/>
            <person name="Xie Z."/>
            <person name="Zhang Y."/>
            <person name="Zwaans B.M."/>
            <person name="Skinner M.E."/>
            <person name="Lombard D.B."/>
            <person name="Zhao Y."/>
        </authorList>
    </citation>
    <scope>ACETYLATION [LARGE SCALE ANALYSIS] AT LYS-148</scope>
    <scope>IDENTIFICATION BY MASS SPECTROMETRY [LARGE SCALE ANALYSIS]</scope>
    <source>
        <tissue>Embryonic fibroblast</tissue>
    </source>
</reference>
<reference key="8">
    <citation type="journal article" date="2014" name="Biochem. Biophys. Res. Commun.">
        <title>MiR-132 prohibits proliferation, invasion, migration, and metastasis in breast cancer by targeting HN1.</title>
        <authorList>
            <person name="Zhang Z.G."/>
            <person name="Chen W.X."/>
            <person name="Wu Y.H."/>
            <person name="Liang H.F."/>
            <person name="Zhang B.X."/>
        </authorList>
    </citation>
    <scope>FUNCTION</scope>
    <scope>INDUCTION BY MIR-132</scope>
</reference>
<feature type="chain" id="PRO_0000054919" description="Jupiter microtubule associated homolog 1">
    <location>
        <begin position="1"/>
        <end position="154"/>
    </location>
</feature>
<feature type="initiator methionine" description="Removed; alternate" evidence="1">
    <location>
        <position position="1"/>
    </location>
</feature>
<feature type="chain" id="PRO_0000424488" description="Jupiter microtubule associated homolog 1, N-terminally processed">
    <location>
        <begin position="2"/>
        <end position="154"/>
    </location>
</feature>
<feature type="region of interest" description="Disordered" evidence="2">
    <location>
        <begin position="1"/>
        <end position="154"/>
    </location>
</feature>
<feature type="compositionally biased region" description="Polar residues" evidence="2">
    <location>
        <begin position="1"/>
        <end position="19"/>
    </location>
</feature>
<feature type="compositionally biased region" description="Polar residues" evidence="2">
    <location>
        <begin position="79"/>
        <end position="91"/>
    </location>
</feature>
<feature type="compositionally biased region" description="Basic and acidic residues" evidence="2">
    <location>
        <begin position="96"/>
        <end position="108"/>
    </location>
</feature>
<feature type="compositionally biased region" description="Pro residues" evidence="2">
    <location>
        <begin position="125"/>
        <end position="138"/>
    </location>
</feature>
<feature type="modified residue" description="N-acetylmethionine" evidence="1">
    <location>
        <position position="1"/>
    </location>
</feature>
<feature type="modified residue" description="N-acetylthreonine; in Hematological and neurological expressed 1 protein, N-terminally processed" evidence="1">
    <location>
        <position position="2"/>
    </location>
</feature>
<feature type="modified residue" description="Phosphoserine" evidence="1">
    <location>
        <position position="28"/>
    </location>
</feature>
<feature type="modified residue" description="Phosphoserine" evidence="1">
    <location>
        <position position="31"/>
    </location>
</feature>
<feature type="modified residue" description="Phosphothreonine" evidence="7">
    <location>
        <position position="54"/>
    </location>
</feature>
<feature type="modified residue" description="Phosphoserine" evidence="1">
    <location>
        <position position="71"/>
    </location>
</feature>
<feature type="modified residue" description="Phosphoserine" evidence="7">
    <location>
        <position position="87"/>
    </location>
</feature>
<feature type="modified residue" description="Phosphoserine" evidence="7">
    <location>
        <position position="88"/>
    </location>
</feature>
<feature type="modified residue" description="Phosphoserine" evidence="1">
    <location>
        <position position="92"/>
    </location>
</feature>
<feature type="modified residue" description="Phosphoserine" evidence="1">
    <location>
        <position position="131"/>
    </location>
</feature>
<feature type="modified residue" description="N6-acetyllysine" evidence="8">
    <location>
        <position position="148"/>
    </location>
</feature>
<protein>
    <recommendedName>
        <fullName evidence="1">Jupiter microtubule associated homolog 1</fullName>
    </recommendedName>
    <alternativeName>
        <fullName evidence="6">Hematological and neurological expressed 1 protein</fullName>
    </alternativeName>
    <component>
        <recommendedName>
            <fullName>Jupiter microtubule associated homolog 1, N-terminally processed</fullName>
        </recommendedName>
    </component>
</protein>
<proteinExistence type="evidence at protein level"/>
<dbReference type="EMBL" id="U90123">
    <property type="protein sequence ID" value="AAB70094.1"/>
    <property type="molecule type" value="mRNA"/>
</dbReference>
<dbReference type="EMBL" id="AK152560">
    <property type="protein sequence ID" value="BAE31313.1"/>
    <property type="molecule type" value="mRNA"/>
</dbReference>
<dbReference type="EMBL" id="AK010057">
    <property type="protein sequence ID" value="BAB26672.1"/>
    <property type="molecule type" value="mRNA"/>
</dbReference>
<dbReference type="EMBL" id="AK013122">
    <property type="protein sequence ID" value="BAB28661.1"/>
    <property type="molecule type" value="mRNA"/>
</dbReference>
<dbReference type="EMBL" id="AK014212">
    <property type="protein sequence ID" value="BAB29208.1"/>
    <property type="molecule type" value="mRNA"/>
</dbReference>
<dbReference type="EMBL" id="AK159784">
    <property type="protein sequence ID" value="BAE35368.1"/>
    <property type="molecule type" value="mRNA"/>
</dbReference>
<dbReference type="EMBL" id="AK167466">
    <property type="protein sequence ID" value="BAE39550.1"/>
    <property type="molecule type" value="mRNA"/>
</dbReference>
<dbReference type="EMBL" id="AK167961">
    <property type="protein sequence ID" value="BAE39958.1"/>
    <property type="molecule type" value="mRNA"/>
</dbReference>
<dbReference type="EMBL" id="AK168632">
    <property type="protein sequence ID" value="BAE40492.1"/>
    <property type="molecule type" value="mRNA"/>
</dbReference>
<dbReference type="EMBL" id="BC003758">
    <property type="protein sequence ID" value="AAH03758.1"/>
    <property type="molecule type" value="mRNA"/>
</dbReference>
<dbReference type="CCDS" id="CCDS25638.1"/>
<dbReference type="RefSeq" id="NP_032284.1">
    <property type="nucleotide sequence ID" value="NM_008258.2"/>
</dbReference>
<dbReference type="BioGRID" id="200350">
    <property type="interactions" value="3"/>
</dbReference>
<dbReference type="FunCoup" id="P97825">
    <property type="interactions" value="2158"/>
</dbReference>
<dbReference type="IntAct" id="P97825">
    <property type="interactions" value="1"/>
</dbReference>
<dbReference type="MINT" id="P97825"/>
<dbReference type="STRING" id="10090.ENSMUSP00000021083"/>
<dbReference type="GlyGen" id="P97825">
    <property type="glycosylation" value="3 sites, 3 N-linked glycans (3 sites)"/>
</dbReference>
<dbReference type="iPTMnet" id="P97825"/>
<dbReference type="PhosphoSitePlus" id="P97825"/>
<dbReference type="jPOST" id="P97825"/>
<dbReference type="PaxDb" id="10090-ENSMUSP00000021083"/>
<dbReference type="PeptideAtlas" id="P97825"/>
<dbReference type="ProteomicsDB" id="269125"/>
<dbReference type="Pumba" id="P97825"/>
<dbReference type="DNASU" id="15374"/>
<dbReference type="Ensembl" id="ENSMUST00000021083.7">
    <property type="protein sequence ID" value="ENSMUSP00000021083.7"/>
    <property type="gene ID" value="ENSMUSG00000020737.13"/>
</dbReference>
<dbReference type="GeneID" id="15374"/>
<dbReference type="KEGG" id="mmu:15374"/>
<dbReference type="UCSC" id="uc007mhv.1">
    <property type="organism name" value="mouse"/>
</dbReference>
<dbReference type="AGR" id="MGI:1096361"/>
<dbReference type="CTD" id="51155"/>
<dbReference type="MGI" id="MGI:1096361">
    <property type="gene designation" value="Jpt1"/>
</dbReference>
<dbReference type="VEuPathDB" id="HostDB:ENSMUSG00000020737"/>
<dbReference type="eggNOG" id="ENOG502S346">
    <property type="taxonomic scope" value="Eukaryota"/>
</dbReference>
<dbReference type="GeneTree" id="ENSGT00940000162422"/>
<dbReference type="HOGENOM" id="CLU_123394_0_0_1"/>
<dbReference type="InParanoid" id="P97825"/>
<dbReference type="OMA" id="VWTQRRE"/>
<dbReference type="OrthoDB" id="10071234at2759"/>
<dbReference type="PhylomeDB" id="P97825"/>
<dbReference type="TreeFam" id="TF327169"/>
<dbReference type="BioGRID-ORCS" id="15374">
    <property type="hits" value="5 hits in 79 CRISPR screens"/>
</dbReference>
<dbReference type="ChiTaRS" id="Hn1">
    <property type="organism name" value="mouse"/>
</dbReference>
<dbReference type="PRO" id="PR:P97825"/>
<dbReference type="Proteomes" id="UP000000589">
    <property type="component" value="Chromosome 11"/>
</dbReference>
<dbReference type="RNAct" id="P97825">
    <property type="molecule type" value="protein"/>
</dbReference>
<dbReference type="Bgee" id="ENSMUSG00000020737">
    <property type="expression patterns" value="Expressed in barrel cortex and 269 other cell types or tissues"/>
</dbReference>
<dbReference type="GO" id="GO:0005829">
    <property type="term" value="C:cytosol"/>
    <property type="evidence" value="ECO:0007669"/>
    <property type="project" value="Ensembl"/>
</dbReference>
<dbReference type="GO" id="GO:0045171">
    <property type="term" value="C:intercellular bridge"/>
    <property type="evidence" value="ECO:0007669"/>
    <property type="project" value="Ensembl"/>
</dbReference>
<dbReference type="GO" id="GO:0015630">
    <property type="term" value="C:microtubule cytoskeleton"/>
    <property type="evidence" value="ECO:0007669"/>
    <property type="project" value="Ensembl"/>
</dbReference>
<dbReference type="GO" id="GO:0005654">
    <property type="term" value="C:nucleoplasm"/>
    <property type="evidence" value="ECO:0007669"/>
    <property type="project" value="Ensembl"/>
</dbReference>
<dbReference type="InterPro" id="IPR033335">
    <property type="entry name" value="JUPITER"/>
</dbReference>
<dbReference type="PANTHER" id="PTHR34930">
    <property type="entry name" value="GEO05313P1"/>
    <property type="match status" value="1"/>
</dbReference>
<dbReference type="PANTHER" id="PTHR34930:SF4">
    <property type="entry name" value="JUPITER MICROTUBULE ASSOCIATED HOMOLOG 1"/>
    <property type="match status" value="1"/>
</dbReference>
<dbReference type="Pfam" id="PF17054">
    <property type="entry name" value="JUPITER"/>
    <property type="match status" value="1"/>
</dbReference>
<evidence type="ECO:0000250" key="1">
    <source>
        <dbReference type="UniProtKB" id="Q9UK76"/>
    </source>
</evidence>
<evidence type="ECO:0000256" key="2">
    <source>
        <dbReference type="SAM" id="MobiDB-lite"/>
    </source>
</evidence>
<evidence type="ECO:0000269" key="3">
    <source>
    </source>
</evidence>
<evidence type="ECO:0000269" key="4">
    <source>
    </source>
</evidence>
<evidence type="ECO:0000305" key="5"/>
<evidence type="ECO:0000312" key="6">
    <source>
        <dbReference type="MGI" id="MGI:1096361"/>
    </source>
</evidence>
<evidence type="ECO:0007744" key="7">
    <source>
    </source>
</evidence>
<evidence type="ECO:0007744" key="8">
    <source>
    </source>
</evidence>
<accession>P97825</accession>
<sequence length="154" mass="16081">MTTTTTFKGVDPNSRNSSRVLRPPGGGSNFSLGFDEPAEQPVRKNKMASNIFGTPEENPPSWAKSAGSKSSGGREDSESPGTQRSNSSEASSGDFLDLKGEGDMHENVDTDFQANLAQMEEKPVPAAPVPSPVAPAPVPSRRNPPGGKSSLVLG</sequence>
<comment type="function">
    <text evidence="1 3">Modulates negatively AKT-mediated GSK3B signaling. Induces CTNNB1 'Ser-33' phosphorylation and degradation through the suppression of the inhibitory 'Ser-9' phosphorylation of GSK3B, which represses the function of the APC:CTNNB1:GSK3B complex and the interaction with CDH1/E-cadherin in adherent junctions (By similarity). Plays a role in the regulation of cell cycle and cell adhesion (PubMed:25450365). Has an inhibitory role on AR-signaling pathway through the induction of receptor proteasomal degradation (By similarity).</text>
</comment>
<comment type="subunit">
    <text evidence="1">Interacts with the complex composed, at least, of APC, CTNNB1 and GSK3B; the interaction takes place with the inactive form of GSK3B (phosphorylated at 'Ser-9').</text>
</comment>
<comment type="subcellular location">
    <subcellularLocation>
        <location evidence="1">Nucleus</location>
    </subcellularLocation>
    <subcellularLocation>
        <location evidence="1">Cytoplasm</location>
    </subcellularLocation>
</comment>
<comment type="tissue specificity">
    <text evidence="4">Expressed in yolk sac, fetal brain, brain, spleen and bone marrow.</text>
</comment>
<comment type="induction">
    <text evidence="3">Negatively regulated by the microRNA miR-132.</text>
</comment>
<comment type="similarity">
    <text evidence="5">Belongs to the JUPITER family.</text>
</comment>
<organism>
    <name type="scientific">Mus musculus</name>
    <name type="common">Mouse</name>
    <dbReference type="NCBI Taxonomy" id="10090"/>
    <lineage>
        <taxon>Eukaryota</taxon>
        <taxon>Metazoa</taxon>
        <taxon>Chordata</taxon>
        <taxon>Craniata</taxon>
        <taxon>Vertebrata</taxon>
        <taxon>Euteleostomi</taxon>
        <taxon>Mammalia</taxon>
        <taxon>Eutheria</taxon>
        <taxon>Euarchontoglires</taxon>
        <taxon>Glires</taxon>
        <taxon>Rodentia</taxon>
        <taxon>Myomorpha</taxon>
        <taxon>Muroidea</taxon>
        <taxon>Muridae</taxon>
        <taxon>Murinae</taxon>
        <taxon>Mus</taxon>
        <taxon>Mus</taxon>
    </lineage>
</organism>
<name>JUPI1_MOUSE</name>
<gene>
    <name evidence="6" type="primary">Jpt1</name>
    <name evidence="6" type="synonym">Hn1</name>
</gene>